<feature type="chain" id="PRO_0000215350" description="Transient receptor potential cation channel subfamily V member 5">
    <location>
        <begin position="1"/>
        <end position="729"/>
    </location>
</feature>
<feature type="topological domain" description="Cytoplasmic" evidence="3">
    <location>
        <begin position="1"/>
        <end position="327"/>
    </location>
</feature>
<feature type="transmembrane region" description="Helical" evidence="3">
    <location>
        <begin position="328"/>
        <end position="348"/>
    </location>
</feature>
<feature type="topological domain" description="Extracellular" evidence="3">
    <location>
        <begin position="349"/>
        <end position="385"/>
    </location>
</feature>
<feature type="transmembrane region" description="Helical" evidence="3">
    <location>
        <begin position="386"/>
        <end position="408"/>
    </location>
</feature>
<feature type="topological domain" description="Cytoplasmic" evidence="3">
    <location>
        <begin position="409"/>
        <end position="419"/>
    </location>
</feature>
<feature type="transmembrane region" description="Helical" evidence="3">
    <location>
        <begin position="420"/>
        <end position="442"/>
    </location>
</feature>
<feature type="topological domain" description="Extracellular" evidence="3">
    <location>
        <begin position="443"/>
        <end position="448"/>
    </location>
</feature>
<feature type="transmembrane region" description="Helical" evidence="3">
    <location>
        <begin position="449"/>
        <end position="469"/>
    </location>
</feature>
<feature type="topological domain" description="Cytoplasmic" evidence="3">
    <location>
        <begin position="470"/>
        <end position="492"/>
    </location>
</feature>
<feature type="transmembrane region" description="Helical" evidence="3">
    <location>
        <begin position="493"/>
        <end position="513"/>
    </location>
</feature>
<feature type="intramembrane region" description="Pore-forming" evidence="3">
    <location>
        <begin position="524"/>
        <end position="544"/>
    </location>
</feature>
<feature type="transmembrane region" description="Helical" evidence="3">
    <location>
        <begin position="557"/>
        <end position="577"/>
    </location>
</feature>
<feature type="topological domain" description="Cytoplasmic" evidence="3">
    <location>
        <begin position="578"/>
        <end position="729"/>
    </location>
</feature>
<feature type="repeat" description="ANK 1" evidence="4">
    <location>
        <begin position="44"/>
        <end position="74"/>
    </location>
</feature>
<feature type="repeat" description="ANK 2" evidence="4">
    <location>
        <begin position="78"/>
        <end position="107"/>
    </location>
</feature>
<feature type="repeat" description="ANK 3" evidence="4">
    <location>
        <begin position="116"/>
        <end position="145"/>
    </location>
</feature>
<feature type="repeat" description="ANK 4" evidence="4">
    <location>
        <begin position="162"/>
        <end position="191"/>
    </location>
</feature>
<feature type="repeat" description="ANK 5" evidence="4">
    <location>
        <begin position="195"/>
        <end position="228"/>
    </location>
</feature>
<feature type="repeat" description="ANK 6" evidence="4">
    <location>
        <begin position="239"/>
        <end position="268"/>
    </location>
</feature>
<feature type="region of interest" description="Interaction with S100A10" evidence="1">
    <location>
        <begin position="598"/>
        <end position="602"/>
    </location>
</feature>
<feature type="region of interest" description="Involved in Ca(2+)-dependent inactivation" evidence="3">
    <location>
        <begin position="650"/>
        <end position="653"/>
    </location>
</feature>
<feature type="region of interest" description="Disordered" evidence="5">
    <location>
        <begin position="654"/>
        <end position="675"/>
    </location>
</feature>
<feature type="region of interest" description="Involved in Ca(2+)-dependent inactivation" evidence="3">
    <location>
        <begin position="700"/>
        <end position="729"/>
    </location>
</feature>
<feature type="compositionally biased region" description="Basic and acidic residues" evidence="5">
    <location>
        <begin position="654"/>
        <end position="665"/>
    </location>
</feature>
<feature type="binding site" evidence="2">
    <location>
        <position position="542"/>
    </location>
    <ligand>
        <name>Ca(2+)</name>
        <dbReference type="ChEBI" id="CHEBI:29108"/>
        <note>ligand shared between two neighboring subunits</note>
    </ligand>
</feature>
<feature type="modified residue" description="Phosphothreonine" evidence="1">
    <location>
        <position position="685"/>
    </location>
</feature>
<feature type="modified residue" description="Phosphoserine" evidence="1">
    <location>
        <position position="689"/>
    </location>
</feature>
<feature type="glycosylation site" description="N-linked (GlcNAc...) asparagine" evidence="8">
    <location>
        <position position="358"/>
    </location>
</feature>
<feature type="splice variant" id="VSP_057199" description="In isoform 2." evidence="13">
    <original>EAYETRE</original>
    <variation>VILLRRG</variation>
    <location>
        <begin position="375"/>
        <end position="381"/>
    </location>
</feature>
<feature type="splice variant" id="VSP_057200" description="In isoform 2." evidence="13">
    <location>
        <begin position="382"/>
        <end position="729"/>
    </location>
</feature>
<feature type="sequence variant" id="VAR_022247" description="In dbSNP:rs4252372." evidence="10">
    <original>A</original>
    <variation>V</variation>
    <location>
        <position position="8"/>
    </location>
</feature>
<feature type="sequence variant" id="VAR_022248" description="In dbSNP:rs4236480." evidence="6 7 10 11">
    <original>H</original>
    <variation>R</variation>
    <location>
        <position position="154"/>
    </location>
</feature>
<feature type="sequence variant" id="VAR_022249" description="In dbSNP:rs4252499." evidence="6 7 9 10 11">
    <original>T</original>
    <variation>A</variation>
    <location>
        <position position="563"/>
    </location>
</feature>
<feature type="sequence variant" id="VAR_022250" description="In dbSNP:rs4252509." evidence="10">
    <original>L</original>
    <variation>F</variation>
    <location>
        <position position="712"/>
    </location>
</feature>
<feature type="mutagenesis site" description="Loss of glycosylation." evidence="8">
    <original>N</original>
    <variation>Q</variation>
    <location>
        <position position="358"/>
    </location>
</feature>
<feature type="helix" evidence="15">
    <location>
        <begin position="699"/>
        <end position="709"/>
    </location>
</feature>
<feature type="strand" evidence="15">
    <location>
        <begin position="719"/>
        <end position="722"/>
    </location>
</feature>
<comment type="function">
    <text evidence="1 3 7 8">Constitutively active calcium selective cation channel thought to be involved in Ca(2+) reabsorption in kidney and intestine (PubMed:11549322, PubMed:18768590). Required for normal Ca(2+) reabsorption in the kidney distal convoluted tubules (By similarity). The channel is activated by low internal calcium level and the current exhibits an inward rectification (PubMed:11549322, PubMed:18768590). A Ca(2+)-dependent feedback regulation includes fast channel inactivation and slow current decay (By similarity). Heteromeric assembly with TRPV6 seems to modify channel properties. TRPV5-TRPV6 heteromultimeric concatemers exhibit voltage-dependent gating (By similarity).</text>
</comment>
<comment type="catalytic activity">
    <reaction evidence="7 8">
        <text>Ca(2+)(in) = Ca(2+)(out)</text>
        <dbReference type="Rhea" id="RHEA:29671"/>
        <dbReference type="ChEBI" id="CHEBI:29108"/>
    </reaction>
</comment>
<comment type="activity regulation">
    <text evidence="8">Activated by WNK3.</text>
</comment>
<comment type="subunit">
    <text evidence="1 3">Homotetramer and probably heterotetramer with TRPV6. Interacts with TRPV6 (By similarity). Interacts with S100A10 and probably with the ANAX2-S100A10 heterotetramer. The interaction with S100A10 is required for the trafficking to the plasma membrane. Interacts with calmodulin. Interacts with BSPRY, which results in its inactivation.</text>
</comment>
<comment type="interaction">
    <interactant intactId="EBI-751281">
        <id>Q9NQA5</id>
    </interactant>
    <interactant intactId="EBI-4286943">
        <id>P05937</id>
        <label>CALB1</label>
    </interactant>
    <organismsDiffer>false</organismsDiffer>
    <experiments>4</experiments>
</comment>
<comment type="subcellular location">
    <subcellularLocation>
        <location evidence="8">Apical cell membrane</location>
        <topology evidence="8">Multi-pass membrane protein</topology>
    </subcellularLocation>
    <text evidence="1 8">Colocalized with S100A10 and ANAX2 along the apical domain of kidney distal tubular cells (By similarity). The expression of the glycosylated form in the cell membrane is increased in the presence of WNK3 (PubMed:18768590).</text>
</comment>
<comment type="alternative products">
    <event type="alternative splicing"/>
    <isoform>
        <id>Q9NQA5-1</id>
        <name>1</name>
        <sequence type="displayed"/>
    </isoform>
    <isoform>
        <id>Q9NQA5-2</id>
        <name>2</name>
        <sequence type="described" ref="VSP_057199 VSP_057200"/>
    </isoform>
</comment>
<comment type="tissue specificity">
    <text evidence="6 7">Expressed at high levels in kidney, small intestine and pancreas, and at lower levels in testis, prostate, placenta, brain, colon and rectum.</text>
</comment>
<comment type="PTM">
    <text evidence="8">Glycosylated.</text>
</comment>
<comment type="similarity">
    <text evidence="14">Belongs to the transient receptor (TC 1.A.4) family. TrpV subfamily. TRPV5 sub-subfamily.</text>
</comment>
<dbReference type="EMBL" id="AJ271207">
    <property type="protein sequence ID" value="CAB96365.2"/>
    <property type="molecule type" value="mRNA"/>
</dbReference>
<dbReference type="EMBL" id="AF304464">
    <property type="protein sequence ID" value="AAL04015.1"/>
    <property type="molecule type" value="mRNA"/>
</dbReference>
<dbReference type="EMBL" id="AJ487965">
    <property type="protein sequence ID" value="CAD32312.2"/>
    <property type="molecule type" value="mRNA"/>
</dbReference>
<dbReference type="EMBL" id="AY206695">
    <property type="protein sequence ID" value="AAO13488.1"/>
    <property type="molecule type" value="Genomic_DNA"/>
</dbReference>
<dbReference type="EMBL" id="AC245427">
    <property type="status" value="NOT_ANNOTATED_CDS"/>
    <property type="molecule type" value="Genomic_DNA"/>
</dbReference>
<dbReference type="EMBL" id="CH236959">
    <property type="protein sequence ID" value="EAL23777.1"/>
    <property type="molecule type" value="Genomic_DNA"/>
</dbReference>
<dbReference type="EMBL" id="CH471198">
    <property type="protein sequence ID" value="EAW51896.1"/>
    <property type="molecule type" value="Genomic_DNA"/>
</dbReference>
<dbReference type="EMBL" id="BC034740">
    <property type="protein sequence ID" value="AAH34740.1"/>
    <property type="molecule type" value="mRNA"/>
</dbReference>
<dbReference type="CCDS" id="CCDS5875.1">
    <molecule id="Q9NQA5-1"/>
</dbReference>
<dbReference type="RefSeq" id="NP_062815.3">
    <molecule id="Q9NQA5-1"/>
    <property type="nucleotide sequence ID" value="NM_019841.6"/>
</dbReference>
<dbReference type="PDB" id="5OEO">
    <property type="method" value="NMR"/>
    <property type="chains" value="C=655-725"/>
</dbReference>
<dbReference type="PDBsum" id="5OEO"/>
<dbReference type="BMRB" id="Q9NQA5"/>
<dbReference type="SMR" id="Q9NQA5"/>
<dbReference type="BioGRID" id="121137">
    <property type="interactions" value="29"/>
</dbReference>
<dbReference type="FunCoup" id="Q9NQA5">
    <property type="interactions" value="117"/>
</dbReference>
<dbReference type="IntAct" id="Q9NQA5">
    <property type="interactions" value="16"/>
</dbReference>
<dbReference type="MINT" id="Q9NQA5"/>
<dbReference type="STRING" id="9606.ENSP00000265310"/>
<dbReference type="BindingDB" id="Q9NQA5"/>
<dbReference type="ChEMBL" id="CHEMBL1628474"/>
<dbReference type="DrugBank" id="DB11093">
    <property type="generic name" value="Calcium citrate"/>
</dbReference>
<dbReference type="DrugBank" id="DB11348">
    <property type="generic name" value="Calcium Phosphate"/>
</dbReference>
<dbReference type="DrugBank" id="DB14481">
    <property type="generic name" value="Calcium phosphate dihydrate"/>
</dbReference>
<dbReference type="DrugCentral" id="Q9NQA5"/>
<dbReference type="GuidetoPHARMACOLOGY" id="511"/>
<dbReference type="TCDB" id="1.A.4.2.10">
    <property type="family name" value="the transient receptor potential ca2+/cation channel (trp-cc) family"/>
</dbReference>
<dbReference type="GlyCosmos" id="Q9NQA5">
    <property type="glycosylation" value="1 site, No reported glycans"/>
</dbReference>
<dbReference type="GlyGen" id="Q9NQA5">
    <property type="glycosylation" value="1 site"/>
</dbReference>
<dbReference type="iPTMnet" id="Q9NQA5"/>
<dbReference type="PhosphoSitePlus" id="Q9NQA5"/>
<dbReference type="SwissPalm" id="Q9NQA5"/>
<dbReference type="BioMuta" id="TRPV5"/>
<dbReference type="DMDM" id="62901471"/>
<dbReference type="MassIVE" id="Q9NQA5"/>
<dbReference type="PaxDb" id="9606-ENSP00000265310"/>
<dbReference type="PeptideAtlas" id="Q9NQA5"/>
<dbReference type="ProteomicsDB" id="19327"/>
<dbReference type="ProteomicsDB" id="82119">
    <molecule id="Q9NQA5-1"/>
</dbReference>
<dbReference type="Antibodypedia" id="32594">
    <property type="antibodies" value="298 antibodies from 34 providers"/>
</dbReference>
<dbReference type="DNASU" id="56302"/>
<dbReference type="Ensembl" id="ENST00000265310.6">
    <molecule id="Q9NQA5-1"/>
    <property type="protein sequence ID" value="ENSP00000265310.1"/>
    <property type="gene ID" value="ENSG00000127412.7"/>
</dbReference>
<dbReference type="Ensembl" id="ENST00000442623.1">
    <molecule id="Q9NQA5-2"/>
    <property type="protein sequence ID" value="ENSP00000406572.1"/>
    <property type="gene ID" value="ENSG00000127412.7"/>
</dbReference>
<dbReference type="Ensembl" id="ENST00000621710.2">
    <molecule id="Q9NQA5-1"/>
    <property type="protein sequence ID" value="ENSP00000483049.1"/>
    <property type="gene ID" value="ENSG00000274348.2"/>
</dbReference>
<dbReference type="Ensembl" id="ENST00000633067.1">
    <molecule id="Q9NQA5-2"/>
    <property type="protein sequence ID" value="ENSP00000488418.1"/>
    <property type="gene ID" value="ENSG00000274348.2"/>
</dbReference>
<dbReference type="GeneID" id="56302"/>
<dbReference type="KEGG" id="hsa:56302"/>
<dbReference type="MANE-Select" id="ENST00000265310.6">
    <property type="protein sequence ID" value="ENSP00000265310.1"/>
    <property type="RefSeq nucleotide sequence ID" value="NM_019841.7"/>
    <property type="RefSeq protein sequence ID" value="NP_062815.3"/>
</dbReference>
<dbReference type="UCSC" id="uc003wbz.3">
    <molecule id="Q9NQA5-1"/>
    <property type="organism name" value="human"/>
</dbReference>
<dbReference type="AGR" id="HGNC:3145"/>
<dbReference type="CTD" id="56302"/>
<dbReference type="DisGeNET" id="56302"/>
<dbReference type="GeneCards" id="TRPV5"/>
<dbReference type="HGNC" id="HGNC:3145">
    <property type="gene designation" value="TRPV5"/>
</dbReference>
<dbReference type="HPA" id="ENSG00000127412">
    <property type="expression patterns" value="Group enriched (brain, kidney)"/>
</dbReference>
<dbReference type="MIM" id="606679">
    <property type="type" value="gene"/>
</dbReference>
<dbReference type="neXtProt" id="NX_Q9NQA5"/>
<dbReference type="OpenTargets" id="ENSG00000127412"/>
<dbReference type="PharmGKB" id="PA35045"/>
<dbReference type="VEuPathDB" id="HostDB:ENSG00000127412"/>
<dbReference type="eggNOG" id="KOG3676">
    <property type="taxonomic scope" value="Eukaryota"/>
</dbReference>
<dbReference type="GeneTree" id="ENSGT00940000161809"/>
<dbReference type="HOGENOM" id="CLU_062553_0_0_1"/>
<dbReference type="InParanoid" id="Q9NQA5"/>
<dbReference type="OMA" id="AYETHED"/>
<dbReference type="OrthoDB" id="533508at2759"/>
<dbReference type="PAN-GO" id="Q9NQA5">
    <property type="GO annotations" value="3 GO annotations based on evolutionary models"/>
</dbReference>
<dbReference type="PhylomeDB" id="Q9NQA5"/>
<dbReference type="TreeFam" id="TF314711"/>
<dbReference type="PathwayCommons" id="Q9NQA5"/>
<dbReference type="Reactome" id="R-HSA-3295583">
    <property type="pathway name" value="TRP channels"/>
</dbReference>
<dbReference type="SignaLink" id="Q9NQA5"/>
<dbReference type="SIGNOR" id="Q9NQA5"/>
<dbReference type="BioGRID-ORCS" id="56302">
    <property type="hits" value="13 hits in 1139 CRISPR screens"/>
</dbReference>
<dbReference type="GeneWiki" id="TRPV5"/>
<dbReference type="GenomeRNAi" id="56302"/>
<dbReference type="Pharos" id="Q9NQA5">
    <property type="development level" value="Tchem"/>
</dbReference>
<dbReference type="PRO" id="PR:Q9NQA5"/>
<dbReference type="Proteomes" id="UP000005640">
    <property type="component" value="Chromosome 7"/>
</dbReference>
<dbReference type="RNAct" id="Q9NQA5">
    <property type="molecule type" value="protein"/>
</dbReference>
<dbReference type="Bgee" id="ENSG00000127412">
    <property type="expression patterns" value="Expressed in C1 segment of cervical spinal cord and 29 other cell types or tissues"/>
</dbReference>
<dbReference type="ExpressionAtlas" id="Q9NQA5">
    <property type="expression patterns" value="baseline and differential"/>
</dbReference>
<dbReference type="GO" id="GO:0016324">
    <property type="term" value="C:apical plasma membrane"/>
    <property type="evidence" value="ECO:0000250"/>
    <property type="project" value="UniProtKB"/>
</dbReference>
<dbReference type="GO" id="GO:0034704">
    <property type="term" value="C:calcium channel complex"/>
    <property type="evidence" value="ECO:0007669"/>
    <property type="project" value="Ensembl"/>
</dbReference>
<dbReference type="GO" id="GO:0005886">
    <property type="term" value="C:plasma membrane"/>
    <property type="evidence" value="ECO:0000314"/>
    <property type="project" value="UniProtKB"/>
</dbReference>
<dbReference type="GO" id="GO:0005262">
    <property type="term" value="F:calcium channel activity"/>
    <property type="evidence" value="ECO:0000314"/>
    <property type="project" value="UniProtKB"/>
</dbReference>
<dbReference type="GO" id="GO:0005516">
    <property type="term" value="F:calmodulin binding"/>
    <property type="evidence" value="ECO:0007669"/>
    <property type="project" value="UniProtKB-KW"/>
</dbReference>
<dbReference type="GO" id="GO:0046872">
    <property type="term" value="F:metal ion binding"/>
    <property type="evidence" value="ECO:0007669"/>
    <property type="project" value="UniProtKB-KW"/>
</dbReference>
<dbReference type="GO" id="GO:0055074">
    <property type="term" value="P:calcium ion homeostasis"/>
    <property type="evidence" value="ECO:0000250"/>
    <property type="project" value="UniProtKB"/>
</dbReference>
<dbReference type="GO" id="GO:0098703">
    <property type="term" value="P:calcium ion import across plasma membrane"/>
    <property type="evidence" value="ECO:0000314"/>
    <property type="project" value="UniProtKB"/>
</dbReference>
<dbReference type="GO" id="GO:0070588">
    <property type="term" value="P:calcium ion transmembrane transport"/>
    <property type="evidence" value="ECO:0000314"/>
    <property type="project" value="UniProtKB"/>
</dbReference>
<dbReference type="GO" id="GO:0006816">
    <property type="term" value="P:calcium ion transport"/>
    <property type="evidence" value="ECO:0000250"/>
    <property type="project" value="UniProtKB"/>
</dbReference>
<dbReference type="GO" id="GO:0060402">
    <property type="term" value="P:calcium ion transport into cytosol"/>
    <property type="evidence" value="ECO:0007669"/>
    <property type="project" value="Ensembl"/>
</dbReference>
<dbReference type="GO" id="GO:0051289">
    <property type="term" value="P:protein homotetramerization"/>
    <property type="evidence" value="ECO:0000250"/>
    <property type="project" value="UniProtKB"/>
</dbReference>
<dbReference type="GO" id="GO:0035809">
    <property type="term" value="P:regulation of urine volume"/>
    <property type="evidence" value="ECO:0000250"/>
    <property type="project" value="UniProtKB"/>
</dbReference>
<dbReference type="CDD" id="cd22296">
    <property type="entry name" value="CBD_TRPV5_C"/>
    <property type="match status" value="1"/>
</dbReference>
<dbReference type="CDD" id="cd22192">
    <property type="entry name" value="TRPV5-6"/>
    <property type="match status" value="1"/>
</dbReference>
<dbReference type="DisProt" id="DP01765"/>
<dbReference type="FunFam" id="1.25.40.20:FF:000487">
    <property type="entry name" value="Transient receptor potential cation channel subfamily V member 5"/>
    <property type="match status" value="1"/>
</dbReference>
<dbReference type="FunFam" id="1.25.40.20:FF:000143">
    <property type="entry name" value="transient receptor potential cation channel subfamily V member 5"/>
    <property type="match status" value="1"/>
</dbReference>
<dbReference type="Gene3D" id="1.25.40.20">
    <property type="entry name" value="Ankyrin repeat-containing domain"/>
    <property type="match status" value="1"/>
</dbReference>
<dbReference type="InterPro" id="IPR002110">
    <property type="entry name" value="Ankyrin_rpt"/>
</dbReference>
<dbReference type="InterPro" id="IPR036770">
    <property type="entry name" value="Ankyrin_rpt-contain_sf"/>
</dbReference>
<dbReference type="InterPro" id="IPR005821">
    <property type="entry name" value="Ion_trans_dom"/>
</dbReference>
<dbReference type="InterPro" id="IPR024862">
    <property type="entry name" value="TRPV"/>
</dbReference>
<dbReference type="InterPro" id="IPR008346">
    <property type="entry name" value="TRPV5"/>
</dbReference>
<dbReference type="InterPro" id="IPR008344">
    <property type="entry name" value="TRPV5/TRPV6"/>
</dbReference>
<dbReference type="NCBIfam" id="TIGR00870">
    <property type="entry name" value="trp"/>
    <property type="match status" value="1"/>
</dbReference>
<dbReference type="PANTHER" id="PTHR10582:SF11">
    <property type="entry name" value="TRANSIENT RECEPTOR POTENTIAL CATION CHANNEL SUBFAMILY V MEMBER 5"/>
    <property type="match status" value="1"/>
</dbReference>
<dbReference type="PANTHER" id="PTHR10582">
    <property type="entry name" value="TRANSIENT RECEPTOR POTENTIAL ION CHANNEL PROTEIN"/>
    <property type="match status" value="1"/>
</dbReference>
<dbReference type="Pfam" id="PF00023">
    <property type="entry name" value="Ank"/>
    <property type="match status" value="1"/>
</dbReference>
<dbReference type="Pfam" id="PF12796">
    <property type="entry name" value="Ank_2"/>
    <property type="match status" value="1"/>
</dbReference>
<dbReference type="Pfam" id="PF00520">
    <property type="entry name" value="Ion_trans"/>
    <property type="match status" value="1"/>
</dbReference>
<dbReference type="PRINTS" id="PR01415">
    <property type="entry name" value="ANKYRIN"/>
</dbReference>
<dbReference type="PRINTS" id="PR01765">
    <property type="entry name" value="ECACCHANNEL"/>
</dbReference>
<dbReference type="PRINTS" id="PR01767">
    <property type="entry name" value="ECACCHANNEL2"/>
</dbReference>
<dbReference type="SMART" id="SM00248">
    <property type="entry name" value="ANK"/>
    <property type="match status" value="5"/>
</dbReference>
<dbReference type="SUPFAM" id="SSF48403">
    <property type="entry name" value="Ankyrin repeat"/>
    <property type="match status" value="1"/>
</dbReference>
<dbReference type="PROSITE" id="PS50297">
    <property type="entry name" value="ANK_REP_REGION"/>
    <property type="match status" value="1"/>
</dbReference>
<dbReference type="PROSITE" id="PS50088">
    <property type="entry name" value="ANK_REPEAT"/>
    <property type="match status" value="2"/>
</dbReference>
<reference key="1">
    <citation type="journal article" date="2000" name="Genomics">
        <title>Molecular cloning, tissue distribution, and chromosomal mapping of the human epithelial calcium channel (ECAC1).</title>
        <authorList>
            <person name="Mueller D."/>
            <person name="Hoenderop J.G."/>
            <person name="Meij I.C."/>
            <person name="van den Heuvel L.P.J."/>
            <person name="Knoers N.V."/>
            <person name="den Hollander A.I."/>
            <person name="Eggert P."/>
            <person name="Garcia-Nieto V."/>
            <person name="Claverie-Martin F."/>
            <person name="Bindels R.J.M."/>
        </authorList>
    </citation>
    <scope>NUCLEOTIDE SEQUENCE [MRNA] (ISOFORM 1)</scope>
    <scope>VARIANTS ARG-154 AND ALA-563</scope>
    <scope>TISSUE SPECIFICITY</scope>
</reference>
<reference key="2">
    <citation type="journal article" date="2001" name="Genomics">
        <title>Structural conservation of the genes encoding CaT1, CaT2, and related cation channels.</title>
        <authorList>
            <person name="Peng J.-B."/>
            <person name="Brown E.M."/>
            <person name="Hediger M.A."/>
        </authorList>
    </citation>
    <scope>NUCLEOTIDE SEQUENCE [MRNA] (ISOFORM 1)</scope>
    <scope>VARIANTS ARG-154 AND ALA-563</scope>
    <scope>FUNCTION</scope>
    <scope>TISSUE SPECIFICITY</scope>
    <scope>TRANSPORTER ACTIVITY</scope>
</reference>
<reference key="3">
    <citation type="submission" date="2002-05" db="EMBL/GenBank/DDBJ databases">
        <authorList>
            <person name="Kelsell R.E."/>
        </authorList>
    </citation>
    <scope>NUCLEOTIDE SEQUENCE [MRNA] (ISOFORM 1)</scope>
    <scope>VARIANT ALA-563</scope>
</reference>
<reference key="4">
    <citation type="submission" date="2002-12" db="EMBL/GenBank/DDBJ databases">
        <authorList>
            <consortium name="SeattleSNPs variation discovery resource"/>
        </authorList>
    </citation>
    <scope>NUCLEOTIDE SEQUENCE [GENOMIC DNA]</scope>
    <scope>VARIANTS VAL-8; ARG-154; ALA-563 AND PHE-712</scope>
</reference>
<reference key="5">
    <citation type="journal article" date="2003" name="Nature">
        <title>The DNA sequence of human chromosome 7.</title>
        <authorList>
            <person name="Hillier L.W."/>
            <person name="Fulton R.S."/>
            <person name="Fulton L.A."/>
            <person name="Graves T.A."/>
            <person name="Pepin K.H."/>
            <person name="Wagner-McPherson C."/>
            <person name="Layman D."/>
            <person name="Maas J."/>
            <person name="Jaeger S."/>
            <person name="Walker R."/>
            <person name="Wylie K."/>
            <person name="Sekhon M."/>
            <person name="Becker M.C."/>
            <person name="O'Laughlin M.D."/>
            <person name="Schaller M.E."/>
            <person name="Fewell G.A."/>
            <person name="Delehaunty K.D."/>
            <person name="Miner T.L."/>
            <person name="Nash W.E."/>
            <person name="Cordes M."/>
            <person name="Du H."/>
            <person name="Sun H."/>
            <person name="Edwards J."/>
            <person name="Bradshaw-Cordum H."/>
            <person name="Ali J."/>
            <person name="Andrews S."/>
            <person name="Isak A."/>
            <person name="Vanbrunt A."/>
            <person name="Nguyen C."/>
            <person name="Du F."/>
            <person name="Lamar B."/>
            <person name="Courtney L."/>
            <person name="Kalicki J."/>
            <person name="Ozersky P."/>
            <person name="Bielicki L."/>
            <person name="Scott K."/>
            <person name="Holmes A."/>
            <person name="Harkins R."/>
            <person name="Harris A."/>
            <person name="Strong C.M."/>
            <person name="Hou S."/>
            <person name="Tomlinson C."/>
            <person name="Dauphin-Kohlberg S."/>
            <person name="Kozlowicz-Reilly A."/>
            <person name="Leonard S."/>
            <person name="Rohlfing T."/>
            <person name="Rock S.M."/>
            <person name="Tin-Wollam A.-M."/>
            <person name="Abbott A."/>
            <person name="Minx P."/>
            <person name="Maupin R."/>
            <person name="Strowmatt C."/>
            <person name="Latreille P."/>
            <person name="Miller N."/>
            <person name="Johnson D."/>
            <person name="Murray J."/>
            <person name="Woessner J.P."/>
            <person name="Wendl M.C."/>
            <person name="Yang S.-P."/>
            <person name="Schultz B.R."/>
            <person name="Wallis J.W."/>
            <person name="Spieth J."/>
            <person name="Bieri T.A."/>
            <person name="Nelson J.O."/>
            <person name="Berkowicz N."/>
            <person name="Wohldmann P.E."/>
            <person name="Cook L.L."/>
            <person name="Hickenbotham M.T."/>
            <person name="Eldred J."/>
            <person name="Williams D."/>
            <person name="Bedell J.A."/>
            <person name="Mardis E.R."/>
            <person name="Clifton S.W."/>
            <person name="Chissoe S.L."/>
            <person name="Marra M.A."/>
            <person name="Raymond C."/>
            <person name="Haugen E."/>
            <person name="Gillett W."/>
            <person name="Zhou Y."/>
            <person name="James R."/>
            <person name="Phelps K."/>
            <person name="Iadanoto S."/>
            <person name="Bubb K."/>
            <person name="Simms E."/>
            <person name="Levy R."/>
            <person name="Clendenning J."/>
            <person name="Kaul R."/>
            <person name="Kent W.J."/>
            <person name="Furey T.S."/>
            <person name="Baertsch R.A."/>
            <person name="Brent M.R."/>
            <person name="Keibler E."/>
            <person name="Flicek P."/>
            <person name="Bork P."/>
            <person name="Suyama M."/>
            <person name="Bailey J.A."/>
            <person name="Portnoy M.E."/>
            <person name="Torrents D."/>
            <person name="Chinwalla A.T."/>
            <person name="Gish W.R."/>
            <person name="Eddy S.R."/>
            <person name="McPherson J.D."/>
            <person name="Olson M.V."/>
            <person name="Eichler E.E."/>
            <person name="Green E.D."/>
            <person name="Waterston R.H."/>
            <person name="Wilson R.K."/>
        </authorList>
    </citation>
    <scope>NUCLEOTIDE SEQUENCE [LARGE SCALE GENOMIC DNA]</scope>
</reference>
<reference key="6">
    <citation type="journal article" date="2003" name="Science">
        <title>Human chromosome 7: DNA sequence and biology.</title>
        <authorList>
            <person name="Scherer S.W."/>
            <person name="Cheung J."/>
            <person name="MacDonald J.R."/>
            <person name="Osborne L.R."/>
            <person name="Nakabayashi K."/>
            <person name="Herbrick J.-A."/>
            <person name="Carson A.R."/>
            <person name="Parker-Katiraee L."/>
            <person name="Skaug J."/>
            <person name="Khaja R."/>
            <person name="Zhang J."/>
            <person name="Hudek A.K."/>
            <person name="Li M."/>
            <person name="Haddad M."/>
            <person name="Duggan G.E."/>
            <person name="Fernandez B.A."/>
            <person name="Kanematsu E."/>
            <person name="Gentles S."/>
            <person name="Christopoulos C.C."/>
            <person name="Choufani S."/>
            <person name="Kwasnicka D."/>
            <person name="Zheng X.H."/>
            <person name="Lai Z."/>
            <person name="Nusskern D.R."/>
            <person name="Zhang Q."/>
            <person name="Gu Z."/>
            <person name="Lu F."/>
            <person name="Zeesman S."/>
            <person name="Nowaczyk M.J."/>
            <person name="Teshima I."/>
            <person name="Chitayat D."/>
            <person name="Shuman C."/>
            <person name="Weksberg R."/>
            <person name="Zackai E.H."/>
            <person name="Grebe T.A."/>
            <person name="Cox S.R."/>
            <person name="Kirkpatrick S.J."/>
            <person name="Rahman N."/>
            <person name="Friedman J.M."/>
            <person name="Heng H.H.Q."/>
            <person name="Pelicci P.G."/>
            <person name="Lo-Coco F."/>
            <person name="Belloni E."/>
            <person name="Shaffer L.G."/>
            <person name="Pober B."/>
            <person name="Morton C.C."/>
            <person name="Gusella J.F."/>
            <person name="Bruns G.A.P."/>
            <person name="Korf B.R."/>
            <person name="Quade B.J."/>
            <person name="Ligon A.H."/>
            <person name="Ferguson H."/>
            <person name="Higgins A.W."/>
            <person name="Leach N.T."/>
            <person name="Herrick S.R."/>
            <person name="Lemyre E."/>
            <person name="Farra C.G."/>
            <person name="Kim H.-G."/>
            <person name="Summers A.M."/>
            <person name="Gripp K.W."/>
            <person name="Roberts W."/>
            <person name="Szatmari P."/>
            <person name="Winsor E.J.T."/>
            <person name="Grzeschik K.-H."/>
            <person name="Teebi A."/>
            <person name="Minassian B.A."/>
            <person name="Kere J."/>
            <person name="Armengol L."/>
            <person name="Pujana M.A."/>
            <person name="Estivill X."/>
            <person name="Wilson M.D."/>
            <person name="Koop B.F."/>
            <person name="Tosi S."/>
            <person name="Moore G.E."/>
            <person name="Boright A.P."/>
            <person name="Zlotorynski E."/>
            <person name="Kerem B."/>
            <person name="Kroisel P.M."/>
            <person name="Petek E."/>
            <person name="Oscier D.G."/>
            <person name="Mould S.J."/>
            <person name="Doehner H."/>
            <person name="Doehner K."/>
            <person name="Rommens J.M."/>
            <person name="Vincent J.B."/>
            <person name="Venter J.C."/>
            <person name="Li P.W."/>
            <person name="Mural R.J."/>
            <person name="Adams M.D."/>
            <person name="Tsui L.-C."/>
        </authorList>
    </citation>
    <scope>NUCLEOTIDE SEQUENCE [LARGE SCALE GENOMIC DNA]</scope>
</reference>
<reference key="7">
    <citation type="submission" date="2005-09" db="EMBL/GenBank/DDBJ databases">
        <authorList>
            <person name="Mural R.J."/>
            <person name="Istrail S."/>
            <person name="Sutton G.G."/>
            <person name="Florea L."/>
            <person name="Halpern A.L."/>
            <person name="Mobarry C.M."/>
            <person name="Lippert R."/>
            <person name="Walenz B."/>
            <person name="Shatkay H."/>
            <person name="Dew I."/>
            <person name="Miller J.R."/>
            <person name="Flanigan M.J."/>
            <person name="Edwards N.J."/>
            <person name="Bolanos R."/>
            <person name="Fasulo D."/>
            <person name="Halldorsson B.V."/>
            <person name="Hannenhalli S."/>
            <person name="Turner R."/>
            <person name="Yooseph S."/>
            <person name="Lu F."/>
            <person name="Nusskern D.R."/>
            <person name="Shue B.C."/>
            <person name="Zheng X.H."/>
            <person name="Zhong F."/>
            <person name="Delcher A.L."/>
            <person name="Huson D.H."/>
            <person name="Kravitz S.A."/>
            <person name="Mouchard L."/>
            <person name="Reinert K."/>
            <person name="Remington K.A."/>
            <person name="Clark A.G."/>
            <person name="Waterman M.S."/>
            <person name="Eichler E.E."/>
            <person name="Adams M.D."/>
            <person name="Hunkapiller M.W."/>
            <person name="Myers E.W."/>
            <person name="Venter J.C."/>
        </authorList>
    </citation>
    <scope>NUCLEOTIDE SEQUENCE [LARGE SCALE GENOMIC DNA]</scope>
    <scope>VARIANTS ARG-154 AND ALA-563</scope>
</reference>
<reference key="8">
    <citation type="journal article" date="2004" name="Genome Res.">
        <title>The status, quality, and expansion of the NIH full-length cDNA project: the Mammalian Gene Collection (MGC).</title>
        <authorList>
            <consortium name="The MGC Project Team"/>
        </authorList>
    </citation>
    <scope>NUCLEOTIDE SEQUENCE [LARGE SCALE MRNA] (ISOFORM 2)</scope>
    <source>
        <tissue>Colon</tissue>
    </source>
</reference>
<reference key="9">
    <citation type="journal article" date="2008" name="Am. J. Physiol.">
        <title>WNK3 positively regulates epithelial calcium channels TRPV5 and TRPV6 via a kinase-dependent pathway.</title>
        <authorList>
            <person name="Zhang W."/>
            <person name="Na T."/>
            <person name="Peng J.B."/>
        </authorList>
    </citation>
    <scope>FUNCTION</scope>
    <scope>GLYCOSYLATION AT ASN-358</scope>
    <scope>SUBCELLULAR LOCATION</scope>
    <scope>ACTIVITY REGULATION</scope>
    <scope>MUTAGENESIS OF ASN-358</scope>
    <scope>TRANSPORTER ACTIVITY</scope>
</reference>
<reference key="10">
    <citation type="journal article" date="2008" name="Proc. Natl. Acad. Sci. U.S.A.">
        <title>A quantitative atlas of mitotic phosphorylation.</title>
        <authorList>
            <person name="Dephoure N."/>
            <person name="Zhou C."/>
            <person name="Villen J."/>
            <person name="Beausoleil S.A."/>
            <person name="Bakalarski C.E."/>
            <person name="Elledge S.J."/>
            <person name="Gygi S.P."/>
        </authorList>
    </citation>
    <scope>IDENTIFICATION BY MASS SPECTROMETRY [LARGE SCALE ANALYSIS]</scope>
    <source>
        <tissue>Cervix carcinoma</tissue>
    </source>
</reference>
<name>TRPV5_HUMAN</name>
<keyword id="KW-0002">3D-structure</keyword>
<keyword id="KW-0025">Alternative splicing</keyword>
<keyword id="KW-0040">ANK repeat</keyword>
<keyword id="KW-0106">Calcium</keyword>
<keyword id="KW-0107">Calcium channel</keyword>
<keyword id="KW-0109">Calcium transport</keyword>
<keyword id="KW-0112">Calmodulin-binding</keyword>
<keyword id="KW-1003">Cell membrane</keyword>
<keyword id="KW-0325">Glycoprotein</keyword>
<keyword id="KW-0407">Ion channel</keyword>
<keyword id="KW-0406">Ion transport</keyword>
<keyword id="KW-0472">Membrane</keyword>
<keyword id="KW-0479">Metal-binding</keyword>
<keyword id="KW-0597">Phosphoprotein</keyword>
<keyword id="KW-1267">Proteomics identification</keyword>
<keyword id="KW-1185">Reference proteome</keyword>
<keyword id="KW-0677">Repeat</keyword>
<keyword id="KW-0812">Transmembrane</keyword>
<keyword id="KW-1133">Transmembrane helix</keyword>
<keyword id="KW-0813">Transport</keyword>
<evidence type="ECO:0000250" key="1">
    <source>
        <dbReference type="UniProtKB" id="P69744"/>
    </source>
</evidence>
<evidence type="ECO:0000250" key="2">
    <source>
        <dbReference type="UniProtKB" id="Q9R186"/>
    </source>
</evidence>
<evidence type="ECO:0000250" key="3">
    <source>
        <dbReference type="UniProtKB" id="Q9XSM3"/>
    </source>
</evidence>
<evidence type="ECO:0000255" key="4"/>
<evidence type="ECO:0000256" key="5">
    <source>
        <dbReference type="SAM" id="MobiDB-lite"/>
    </source>
</evidence>
<evidence type="ECO:0000269" key="6">
    <source>
    </source>
</evidence>
<evidence type="ECO:0000269" key="7">
    <source>
    </source>
</evidence>
<evidence type="ECO:0000269" key="8">
    <source>
    </source>
</evidence>
<evidence type="ECO:0000269" key="9">
    <source ref="3"/>
</evidence>
<evidence type="ECO:0000269" key="10">
    <source ref="4"/>
</evidence>
<evidence type="ECO:0000269" key="11">
    <source ref="7"/>
</evidence>
<evidence type="ECO:0000303" key="12">
    <source>
    </source>
</evidence>
<evidence type="ECO:0000303" key="13">
    <source>
    </source>
</evidence>
<evidence type="ECO:0000305" key="14"/>
<evidence type="ECO:0007829" key="15">
    <source>
        <dbReference type="PDB" id="5OEO"/>
    </source>
</evidence>
<accession>Q9NQA5</accession>
<accession>A0A0A6YY98</accession>
<accession>A4D2H7</accession>
<accession>E9PBZ6</accession>
<accession>Q8N4C1</accession>
<accession>Q8NDW5</accession>
<accession>Q8NDX7</accession>
<accession>Q8NDX8</accession>
<accession>Q96PM6</accession>
<organism>
    <name type="scientific">Homo sapiens</name>
    <name type="common">Human</name>
    <dbReference type="NCBI Taxonomy" id="9606"/>
    <lineage>
        <taxon>Eukaryota</taxon>
        <taxon>Metazoa</taxon>
        <taxon>Chordata</taxon>
        <taxon>Craniata</taxon>
        <taxon>Vertebrata</taxon>
        <taxon>Euteleostomi</taxon>
        <taxon>Mammalia</taxon>
        <taxon>Eutheria</taxon>
        <taxon>Euarchontoglires</taxon>
        <taxon>Primates</taxon>
        <taxon>Haplorrhini</taxon>
        <taxon>Catarrhini</taxon>
        <taxon>Hominidae</taxon>
        <taxon>Homo</taxon>
    </lineage>
</organism>
<protein>
    <recommendedName>
        <fullName>Transient receptor potential cation channel subfamily V member 5</fullName>
        <shortName>TrpV5</shortName>
    </recommendedName>
    <alternativeName>
        <fullName>Calcium transport protein 2</fullName>
        <shortName>CaT2</shortName>
    </alternativeName>
    <alternativeName>
        <fullName evidence="12">Epithelial calcium channel 1</fullName>
        <shortName>ECaC</shortName>
        <shortName>ECaC1</shortName>
    </alternativeName>
    <alternativeName>
        <fullName>Osm-9-like TRP channel 3</fullName>
        <shortName>OTRPC3</shortName>
    </alternativeName>
</protein>
<proteinExistence type="evidence at protein level"/>
<gene>
    <name type="primary">TRPV5</name>
    <name evidence="12" type="synonym">ECAC1</name>
</gene>
<sequence length="729" mass="82562">MGGFLPKAEGPGSQLQKLLPSFLVREQDWDQHLDKLHMLQQKRILESPLLRASKENDLSVLRQLLLDCTCDVRQRGALGETALHIAALYDNLEAALVLMEAAPELVFEPTTCEAFAGQTALHIAVVNQNVNLVRALLTRRASVSARATGTAFRHSPRNLIYFGEHPLSFAACVNSEEIVRLLIEHGADIRAQDSLGNTVLHILILQPNKTFACQMYNLLLSYDGHGDHLQPLDLVPNHQGLTPFKLAGVEGNTVMFQHLMQKRRHIQWTYGPLTSILYDLTEIDSWGEELSFLELVVSSDKREARQILEQTPVKELVSFKWNKYGRPYFCILAALYLLYMICFTTCCVYRPLKFRGGNRTHSRDITILQQKLLQEAYETREDIIRLVGELVSIVGAVIILLLEIPDIFRVGASRYFGKTILGGPFHVIIITYASLVLVTMVMRLTNTNGEVVPMSFALVLGWCSVMYFTRGFQMLGPFTIMIQKMIFGDLMRFCWLMAVVILGFASAFYIIFQTEDPTSLGQFYDYPMALFTTFELFLTVIDAPANYDVDLPFMFSIVNFAFTIIATLLMLNLFIAMMGDTHWRVAQERDELWRAQVVATTVMLERKLPRCLWPRSGICGCEFGLGDRWFLRVENHNDQNPLRVLRYVEVFKNSDKEDDQEHPSEKQPSGAESGTLARASLALPTSSLSRTASQSSSHRGWEILRQNTLGHLNLGLNLSEGDGEEVYHF</sequence>